<accession>B1IUY7</accession>
<comment type="function">
    <text evidence="1">Involved in the synthesis of autoinducer 2 (AI-2) which is secreted by bacteria and is used to communicate both the cell density and the metabolic potential of the environment. The regulation of gene expression in response to changes in cell density is called quorum sensing. Catalyzes the transformation of S-ribosylhomocysteine (RHC) to homocysteine (HC) and 4,5-dihydroxy-2,3-pentadione (DPD).</text>
</comment>
<comment type="catalytic activity">
    <reaction evidence="1">
        <text>S-(5-deoxy-D-ribos-5-yl)-L-homocysteine = (S)-4,5-dihydroxypentane-2,3-dione + L-homocysteine</text>
        <dbReference type="Rhea" id="RHEA:17753"/>
        <dbReference type="ChEBI" id="CHEBI:29484"/>
        <dbReference type="ChEBI" id="CHEBI:58195"/>
        <dbReference type="ChEBI" id="CHEBI:58199"/>
        <dbReference type="EC" id="4.4.1.21"/>
    </reaction>
</comment>
<comment type="cofactor">
    <cofactor evidence="1">
        <name>Fe cation</name>
        <dbReference type="ChEBI" id="CHEBI:24875"/>
    </cofactor>
    <text evidence="1">Binds 1 Fe cation per subunit.</text>
</comment>
<comment type="subunit">
    <text evidence="1">Homodimer.</text>
</comment>
<comment type="similarity">
    <text evidence="1">Belongs to the LuxS family.</text>
</comment>
<evidence type="ECO:0000255" key="1">
    <source>
        <dbReference type="HAMAP-Rule" id="MF_00091"/>
    </source>
</evidence>
<gene>
    <name evidence="1" type="primary">luxS</name>
    <name type="ordered locus">EcolC_1020</name>
</gene>
<proteinExistence type="inferred from homology"/>
<keyword id="KW-0071">Autoinducer synthesis</keyword>
<keyword id="KW-0408">Iron</keyword>
<keyword id="KW-0456">Lyase</keyword>
<keyword id="KW-0479">Metal-binding</keyword>
<keyword id="KW-0673">Quorum sensing</keyword>
<feature type="chain" id="PRO_1000075453" description="S-ribosylhomocysteine lyase">
    <location>
        <begin position="1"/>
        <end position="171"/>
    </location>
</feature>
<feature type="binding site" evidence="1">
    <location>
        <position position="54"/>
    </location>
    <ligand>
        <name>Fe cation</name>
        <dbReference type="ChEBI" id="CHEBI:24875"/>
    </ligand>
</feature>
<feature type="binding site" evidence="1">
    <location>
        <position position="58"/>
    </location>
    <ligand>
        <name>Fe cation</name>
        <dbReference type="ChEBI" id="CHEBI:24875"/>
    </ligand>
</feature>
<feature type="binding site" evidence="1">
    <location>
        <position position="128"/>
    </location>
    <ligand>
        <name>Fe cation</name>
        <dbReference type="ChEBI" id="CHEBI:24875"/>
    </ligand>
</feature>
<organism>
    <name type="scientific">Escherichia coli (strain ATCC 8739 / DSM 1576 / NBRC 3972 / NCIMB 8545 / WDCM 00012 / Crooks)</name>
    <dbReference type="NCBI Taxonomy" id="481805"/>
    <lineage>
        <taxon>Bacteria</taxon>
        <taxon>Pseudomonadati</taxon>
        <taxon>Pseudomonadota</taxon>
        <taxon>Gammaproteobacteria</taxon>
        <taxon>Enterobacterales</taxon>
        <taxon>Enterobacteriaceae</taxon>
        <taxon>Escherichia</taxon>
    </lineage>
</organism>
<name>LUXS_ECOLC</name>
<protein>
    <recommendedName>
        <fullName evidence="1">S-ribosylhomocysteine lyase</fullName>
        <ecNumber evidence="1">4.4.1.21</ecNumber>
    </recommendedName>
    <alternativeName>
        <fullName evidence="1">AI-2 synthesis protein</fullName>
    </alternativeName>
    <alternativeName>
        <fullName evidence="1">Autoinducer-2 production protein LuxS</fullName>
    </alternativeName>
</protein>
<dbReference type="EC" id="4.4.1.21" evidence="1"/>
<dbReference type="EMBL" id="CP000946">
    <property type="protein sequence ID" value="ACA76689.1"/>
    <property type="molecule type" value="Genomic_DNA"/>
</dbReference>
<dbReference type="RefSeq" id="WP_001130211.1">
    <property type="nucleotide sequence ID" value="NZ_MTFT01000026.1"/>
</dbReference>
<dbReference type="SMR" id="B1IUY7"/>
<dbReference type="GeneID" id="93779324"/>
<dbReference type="KEGG" id="ecl:EcolC_1020"/>
<dbReference type="HOGENOM" id="CLU_107531_2_0_6"/>
<dbReference type="GO" id="GO:0005506">
    <property type="term" value="F:iron ion binding"/>
    <property type="evidence" value="ECO:0007669"/>
    <property type="project" value="InterPro"/>
</dbReference>
<dbReference type="GO" id="GO:0043768">
    <property type="term" value="F:S-ribosylhomocysteine lyase activity"/>
    <property type="evidence" value="ECO:0007669"/>
    <property type="project" value="UniProtKB-UniRule"/>
</dbReference>
<dbReference type="GO" id="GO:0009372">
    <property type="term" value="P:quorum sensing"/>
    <property type="evidence" value="ECO:0007669"/>
    <property type="project" value="UniProtKB-UniRule"/>
</dbReference>
<dbReference type="FunFam" id="3.30.1360.80:FF:000001">
    <property type="entry name" value="S-ribosylhomocysteine lyase"/>
    <property type="match status" value="1"/>
</dbReference>
<dbReference type="Gene3D" id="3.30.1360.80">
    <property type="entry name" value="S-ribosylhomocysteinase (LuxS)"/>
    <property type="match status" value="1"/>
</dbReference>
<dbReference type="HAMAP" id="MF_00091">
    <property type="entry name" value="LuxS"/>
    <property type="match status" value="1"/>
</dbReference>
<dbReference type="InterPro" id="IPR037005">
    <property type="entry name" value="LuxS_sf"/>
</dbReference>
<dbReference type="InterPro" id="IPR011249">
    <property type="entry name" value="Metalloenz_LuxS/M16"/>
</dbReference>
<dbReference type="InterPro" id="IPR003815">
    <property type="entry name" value="S-ribosylhomocysteinase"/>
</dbReference>
<dbReference type="NCBIfam" id="NF002602">
    <property type="entry name" value="PRK02260.1-2"/>
    <property type="match status" value="1"/>
</dbReference>
<dbReference type="PANTHER" id="PTHR35799">
    <property type="entry name" value="S-RIBOSYLHOMOCYSTEINE LYASE"/>
    <property type="match status" value="1"/>
</dbReference>
<dbReference type="PANTHER" id="PTHR35799:SF1">
    <property type="entry name" value="S-RIBOSYLHOMOCYSTEINE LYASE"/>
    <property type="match status" value="1"/>
</dbReference>
<dbReference type="Pfam" id="PF02664">
    <property type="entry name" value="LuxS"/>
    <property type="match status" value="1"/>
</dbReference>
<dbReference type="PIRSF" id="PIRSF006160">
    <property type="entry name" value="AI2"/>
    <property type="match status" value="1"/>
</dbReference>
<dbReference type="PRINTS" id="PR01487">
    <property type="entry name" value="LUXSPROTEIN"/>
</dbReference>
<dbReference type="SUPFAM" id="SSF63411">
    <property type="entry name" value="LuxS/MPP-like metallohydrolase"/>
    <property type="match status" value="1"/>
</dbReference>
<sequence>MPLLDSFTVDHTRMEAPAVRVAKTMNTPHGDAITVFDLRFCVPNKEVMPERGIHTLEHLFAGFMRNHLNGNGVEIIDISPMGCRTGFYMSLIGTPDEQRVADAWKAAMEDVLKVQDQNQIPELNVYQCGTYQMHSLQEAQDIARSILERDVRINSNEELALPKEKLQELHI</sequence>
<reference key="1">
    <citation type="submission" date="2008-02" db="EMBL/GenBank/DDBJ databases">
        <title>Complete sequence of Escherichia coli C str. ATCC 8739.</title>
        <authorList>
            <person name="Copeland A."/>
            <person name="Lucas S."/>
            <person name="Lapidus A."/>
            <person name="Glavina del Rio T."/>
            <person name="Dalin E."/>
            <person name="Tice H."/>
            <person name="Bruce D."/>
            <person name="Goodwin L."/>
            <person name="Pitluck S."/>
            <person name="Kiss H."/>
            <person name="Brettin T."/>
            <person name="Detter J.C."/>
            <person name="Han C."/>
            <person name="Kuske C.R."/>
            <person name="Schmutz J."/>
            <person name="Larimer F."/>
            <person name="Land M."/>
            <person name="Hauser L."/>
            <person name="Kyrpides N."/>
            <person name="Mikhailova N."/>
            <person name="Ingram L."/>
            <person name="Richardson P."/>
        </authorList>
    </citation>
    <scope>NUCLEOTIDE SEQUENCE [LARGE SCALE GENOMIC DNA]</scope>
    <source>
        <strain>ATCC 8739 / DSM 1576 / NBRC 3972 / NCIMB 8545 / WDCM 00012 / Crooks</strain>
    </source>
</reference>